<sequence length="216" mass="23904">MRGFGAEELLNCYARGVFPMAEGRDDPRIYLLDPDERGIIPLDQFHASRSLRKTVRQDVYQVTINQDFEAVVAGCAQSAPGREETWINESIIRLYSQLHDAGYAHSVECWSGADLVGGLYGVSLGAAFFGESMFSLRRDASKVALVHLIARLRAGGYSLLDTQFTTEHLESFGARTISRSDYRERLAEALIFEADFSALPDEITGAQALQSITQTS</sequence>
<gene>
    <name evidence="1" type="primary">aat</name>
    <name type="ordered locus">Mmar10_1264</name>
</gene>
<keyword id="KW-0012">Acyltransferase</keyword>
<keyword id="KW-0963">Cytoplasm</keyword>
<keyword id="KW-1185">Reference proteome</keyword>
<keyword id="KW-0808">Transferase</keyword>
<dbReference type="EC" id="2.3.2.6" evidence="1"/>
<dbReference type="EMBL" id="CP000449">
    <property type="protein sequence ID" value="ABI65556.1"/>
    <property type="molecule type" value="Genomic_DNA"/>
</dbReference>
<dbReference type="RefSeq" id="WP_011643203.1">
    <property type="nucleotide sequence ID" value="NC_008347.1"/>
</dbReference>
<dbReference type="SMR" id="Q0AQ81"/>
<dbReference type="STRING" id="394221.Mmar10_1264"/>
<dbReference type="KEGG" id="mmr:Mmar10_1264"/>
<dbReference type="eggNOG" id="COG2360">
    <property type="taxonomic scope" value="Bacteria"/>
</dbReference>
<dbReference type="HOGENOM" id="CLU_075045_1_0_5"/>
<dbReference type="OrthoDB" id="9790282at2"/>
<dbReference type="Proteomes" id="UP000001964">
    <property type="component" value="Chromosome"/>
</dbReference>
<dbReference type="GO" id="GO:0005737">
    <property type="term" value="C:cytoplasm"/>
    <property type="evidence" value="ECO:0007669"/>
    <property type="project" value="UniProtKB-SubCell"/>
</dbReference>
<dbReference type="GO" id="GO:0008914">
    <property type="term" value="F:leucyl-tRNA--protein transferase activity"/>
    <property type="evidence" value="ECO:0007669"/>
    <property type="project" value="UniProtKB-UniRule"/>
</dbReference>
<dbReference type="GO" id="GO:0030163">
    <property type="term" value="P:protein catabolic process"/>
    <property type="evidence" value="ECO:0007669"/>
    <property type="project" value="UniProtKB-UniRule"/>
</dbReference>
<dbReference type="FunFam" id="3.40.630.70:FF:000001">
    <property type="entry name" value="Leucyl/phenylalanyl-tRNA--protein transferase"/>
    <property type="match status" value="1"/>
</dbReference>
<dbReference type="Gene3D" id="3.40.630.70">
    <property type="entry name" value="Leucyl/phenylalanyl-tRNA-protein transferase, C-terminal domain"/>
    <property type="match status" value="1"/>
</dbReference>
<dbReference type="HAMAP" id="MF_00688">
    <property type="entry name" value="Leu_Phe_trans"/>
    <property type="match status" value="1"/>
</dbReference>
<dbReference type="InterPro" id="IPR016181">
    <property type="entry name" value="Acyl_CoA_acyltransferase"/>
</dbReference>
<dbReference type="InterPro" id="IPR004616">
    <property type="entry name" value="Leu/Phe-tRNA_Trfase"/>
</dbReference>
<dbReference type="InterPro" id="IPR042203">
    <property type="entry name" value="Leu/Phe-tRNA_Trfase_C"/>
</dbReference>
<dbReference type="NCBIfam" id="TIGR00667">
    <property type="entry name" value="aat"/>
    <property type="match status" value="1"/>
</dbReference>
<dbReference type="PANTHER" id="PTHR30098">
    <property type="entry name" value="LEUCYL/PHENYLALANYL-TRNA--PROTEIN TRANSFERASE"/>
    <property type="match status" value="1"/>
</dbReference>
<dbReference type="PANTHER" id="PTHR30098:SF2">
    <property type="entry name" value="LEUCYL_PHENYLALANYL-TRNA--PROTEIN TRANSFERASE"/>
    <property type="match status" value="1"/>
</dbReference>
<dbReference type="Pfam" id="PF03588">
    <property type="entry name" value="Leu_Phe_trans"/>
    <property type="match status" value="1"/>
</dbReference>
<dbReference type="SUPFAM" id="SSF55729">
    <property type="entry name" value="Acyl-CoA N-acyltransferases (Nat)"/>
    <property type="match status" value="1"/>
</dbReference>
<accession>Q0AQ81</accession>
<organism>
    <name type="scientific">Maricaulis maris (strain MCS10)</name>
    <name type="common">Caulobacter maris</name>
    <dbReference type="NCBI Taxonomy" id="394221"/>
    <lineage>
        <taxon>Bacteria</taxon>
        <taxon>Pseudomonadati</taxon>
        <taxon>Pseudomonadota</taxon>
        <taxon>Alphaproteobacteria</taxon>
        <taxon>Maricaulales</taxon>
        <taxon>Maricaulaceae</taxon>
        <taxon>Maricaulis</taxon>
    </lineage>
</organism>
<feature type="chain" id="PRO_0000304342" description="Leucyl/phenylalanyl-tRNA--protein transferase">
    <location>
        <begin position="1"/>
        <end position="216"/>
    </location>
</feature>
<evidence type="ECO:0000255" key="1">
    <source>
        <dbReference type="HAMAP-Rule" id="MF_00688"/>
    </source>
</evidence>
<protein>
    <recommendedName>
        <fullName evidence="1">Leucyl/phenylalanyl-tRNA--protein transferase</fullName>
        <ecNumber evidence="1">2.3.2.6</ecNumber>
    </recommendedName>
    <alternativeName>
        <fullName evidence="1">L/F-transferase</fullName>
    </alternativeName>
    <alternativeName>
        <fullName evidence="1">Leucyltransferase</fullName>
    </alternativeName>
    <alternativeName>
        <fullName evidence="1">Phenyalanyltransferase</fullName>
    </alternativeName>
</protein>
<proteinExistence type="inferred from homology"/>
<name>LFTR_MARMM</name>
<comment type="function">
    <text evidence="1">Functions in the N-end rule pathway of protein degradation where it conjugates Leu, Phe and, less efficiently, Met from aminoacyl-tRNAs to the N-termini of proteins containing an N-terminal arginine or lysine.</text>
</comment>
<comment type="catalytic activity">
    <reaction evidence="1">
        <text>N-terminal L-lysyl-[protein] + L-leucyl-tRNA(Leu) = N-terminal L-leucyl-L-lysyl-[protein] + tRNA(Leu) + H(+)</text>
        <dbReference type="Rhea" id="RHEA:12340"/>
        <dbReference type="Rhea" id="RHEA-COMP:9613"/>
        <dbReference type="Rhea" id="RHEA-COMP:9622"/>
        <dbReference type="Rhea" id="RHEA-COMP:12670"/>
        <dbReference type="Rhea" id="RHEA-COMP:12671"/>
        <dbReference type="ChEBI" id="CHEBI:15378"/>
        <dbReference type="ChEBI" id="CHEBI:65249"/>
        <dbReference type="ChEBI" id="CHEBI:78442"/>
        <dbReference type="ChEBI" id="CHEBI:78494"/>
        <dbReference type="ChEBI" id="CHEBI:133043"/>
        <dbReference type="EC" id="2.3.2.6"/>
    </reaction>
</comment>
<comment type="catalytic activity">
    <reaction evidence="1">
        <text>N-terminal L-arginyl-[protein] + L-leucyl-tRNA(Leu) = N-terminal L-leucyl-L-arginyl-[protein] + tRNA(Leu) + H(+)</text>
        <dbReference type="Rhea" id="RHEA:50416"/>
        <dbReference type="Rhea" id="RHEA-COMP:9613"/>
        <dbReference type="Rhea" id="RHEA-COMP:9622"/>
        <dbReference type="Rhea" id="RHEA-COMP:12672"/>
        <dbReference type="Rhea" id="RHEA-COMP:12673"/>
        <dbReference type="ChEBI" id="CHEBI:15378"/>
        <dbReference type="ChEBI" id="CHEBI:64719"/>
        <dbReference type="ChEBI" id="CHEBI:78442"/>
        <dbReference type="ChEBI" id="CHEBI:78494"/>
        <dbReference type="ChEBI" id="CHEBI:133044"/>
        <dbReference type="EC" id="2.3.2.6"/>
    </reaction>
</comment>
<comment type="catalytic activity">
    <reaction evidence="1">
        <text>L-phenylalanyl-tRNA(Phe) + an N-terminal L-alpha-aminoacyl-[protein] = an N-terminal L-phenylalanyl-L-alpha-aminoacyl-[protein] + tRNA(Phe)</text>
        <dbReference type="Rhea" id="RHEA:43632"/>
        <dbReference type="Rhea" id="RHEA-COMP:9668"/>
        <dbReference type="Rhea" id="RHEA-COMP:9699"/>
        <dbReference type="Rhea" id="RHEA-COMP:10636"/>
        <dbReference type="Rhea" id="RHEA-COMP:10637"/>
        <dbReference type="ChEBI" id="CHEBI:78442"/>
        <dbReference type="ChEBI" id="CHEBI:78531"/>
        <dbReference type="ChEBI" id="CHEBI:78597"/>
        <dbReference type="ChEBI" id="CHEBI:83561"/>
        <dbReference type="EC" id="2.3.2.6"/>
    </reaction>
</comment>
<comment type="subcellular location">
    <subcellularLocation>
        <location evidence="1">Cytoplasm</location>
    </subcellularLocation>
</comment>
<comment type="similarity">
    <text evidence="1">Belongs to the L/F-transferase family.</text>
</comment>
<reference key="1">
    <citation type="submission" date="2006-08" db="EMBL/GenBank/DDBJ databases">
        <title>Complete sequence of Maricaulis maris MCS10.</title>
        <authorList>
            <consortium name="US DOE Joint Genome Institute"/>
            <person name="Copeland A."/>
            <person name="Lucas S."/>
            <person name="Lapidus A."/>
            <person name="Barry K."/>
            <person name="Detter J.C."/>
            <person name="Glavina del Rio T."/>
            <person name="Hammon N."/>
            <person name="Israni S."/>
            <person name="Dalin E."/>
            <person name="Tice H."/>
            <person name="Pitluck S."/>
            <person name="Saunders E."/>
            <person name="Brettin T."/>
            <person name="Bruce D."/>
            <person name="Han C."/>
            <person name="Tapia R."/>
            <person name="Gilna P."/>
            <person name="Schmutz J."/>
            <person name="Larimer F."/>
            <person name="Land M."/>
            <person name="Hauser L."/>
            <person name="Kyrpides N."/>
            <person name="Mikhailova N."/>
            <person name="Viollier P."/>
            <person name="Stephens C."/>
            <person name="Richardson P."/>
        </authorList>
    </citation>
    <scope>NUCLEOTIDE SEQUENCE [LARGE SCALE GENOMIC DNA]</scope>
    <source>
        <strain>MCS10</strain>
    </source>
</reference>